<accession>Q7AP54</accession>
<evidence type="ECO:0000255" key="1"/>
<evidence type="ECO:0000255" key="2">
    <source>
        <dbReference type="PROSITE-ProRule" id="PRU00337"/>
    </source>
</evidence>
<evidence type="ECO:0000256" key="3">
    <source>
        <dbReference type="SAM" id="MobiDB-lite"/>
    </source>
</evidence>
<evidence type="ECO:0000269" key="4">
    <source>
    </source>
</evidence>
<evidence type="ECO:0000269" key="5">
    <source>
    </source>
</evidence>
<evidence type="ECO:0000269" key="6">
    <source>
    </source>
</evidence>
<evidence type="ECO:0000269" key="7">
    <source>
    </source>
</evidence>
<evidence type="ECO:0000269" key="8">
    <source>
    </source>
</evidence>
<evidence type="ECO:0000269" key="9">
    <source>
    </source>
</evidence>
<evidence type="ECO:0000269" key="10">
    <source>
    </source>
</evidence>
<evidence type="ECO:0000269" key="11">
    <source>
    </source>
</evidence>
<evidence type="ECO:0000269" key="12">
    <source>
    </source>
</evidence>
<evidence type="ECO:0000303" key="13">
    <source>
    </source>
</evidence>
<evidence type="ECO:0000303" key="14">
    <source>
    </source>
</evidence>
<evidence type="ECO:0000305" key="15">
    <source>
    </source>
</evidence>
<evidence type="ECO:0000305" key="16">
    <source>
    </source>
</evidence>
<evidence type="ECO:0000305" key="17">
    <source>
    </source>
</evidence>
<evidence type="ECO:0000305" key="18">
    <source>
    </source>
</evidence>
<evidence type="ECO:0000305" key="19">
    <source>
    </source>
</evidence>
<evidence type="ECO:0000305" key="20">
    <source>
    </source>
</evidence>
<evidence type="ECO:0000305" key="21">
    <source>
    </source>
</evidence>
<evidence type="ECO:0007744" key="22">
    <source>
        <dbReference type="PDB" id="4MYP"/>
    </source>
</evidence>
<evidence type="ECO:0007744" key="23">
    <source>
        <dbReference type="PDB" id="4NLA"/>
    </source>
</evidence>
<evidence type="ECO:0007829" key="24">
    <source>
        <dbReference type="PDB" id="4MYP"/>
    </source>
</evidence>
<dbReference type="EMBL" id="AL591982">
    <property type="protein sequence ID" value="CAD00263.1"/>
    <property type="molecule type" value="Genomic_DNA"/>
</dbReference>
<dbReference type="PIR" id="AI1347">
    <property type="entry name" value="AI1347"/>
</dbReference>
<dbReference type="RefSeq" id="NP_465709.1">
    <property type="nucleotide sequence ID" value="NC_003210.1"/>
</dbReference>
<dbReference type="RefSeq" id="WP_003722309.1">
    <property type="nucleotide sequence ID" value="NZ_CP149495.1"/>
</dbReference>
<dbReference type="PDB" id="4MYP">
    <property type="method" value="X-ray"/>
    <property type="resolution" value="1.80 A"/>
    <property type="chains" value="A/B=183-303"/>
</dbReference>
<dbReference type="PDB" id="4NLA">
    <property type="method" value="X-ray"/>
    <property type="resolution" value="2.70 A"/>
    <property type="chains" value="A=183-303"/>
</dbReference>
<dbReference type="PDBsum" id="4MYP"/>
<dbReference type="PDBsum" id="4NLA"/>
<dbReference type="SMR" id="Q7AP54"/>
<dbReference type="STRING" id="169963.gene:17594876"/>
<dbReference type="PaxDb" id="169963-lmo2185"/>
<dbReference type="EnsemblBacteria" id="CAD00263">
    <property type="protein sequence ID" value="CAD00263"/>
    <property type="gene ID" value="CAD00263"/>
</dbReference>
<dbReference type="GeneID" id="984803"/>
<dbReference type="KEGG" id="lmo:lmo2185"/>
<dbReference type="PATRIC" id="fig|169963.11.peg.2237"/>
<dbReference type="eggNOG" id="COG5386">
    <property type="taxonomic scope" value="Bacteria"/>
</dbReference>
<dbReference type="HOGENOM" id="CLU_008730_0_0_9"/>
<dbReference type="OrthoDB" id="2413751at2"/>
<dbReference type="BioCyc" id="LMON169963:LMO2185-MONOMER"/>
<dbReference type="EvolutionaryTrace" id="Q7AP54"/>
<dbReference type="Proteomes" id="UP000000817">
    <property type="component" value="Chromosome"/>
</dbReference>
<dbReference type="GO" id="GO:0009986">
    <property type="term" value="C:cell surface"/>
    <property type="evidence" value="ECO:0007669"/>
    <property type="project" value="UniProtKB-SubCell"/>
</dbReference>
<dbReference type="GO" id="GO:0005576">
    <property type="term" value="C:extracellular region"/>
    <property type="evidence" value="ECO:0007669"/>
    <property type="project" value="UniProtKB-SubCell"/>
</dbReference>
<dbReference type="GO" id="GO:0046872">
    <property type="term" value="F:metal ion binding"/>
    <property type="evidence" value="ECO:0007669"/>
    <property type="project" value="UniProtKB-KW"/>
</dbReference>
<dbReference type="GO" id="GO:0071281">
    <property type="term" value="P:cellular response to iron ion"/>
    <property type="evidence" value="ECO:0000270"/>
    <property type="project" value="CollecTF"/>
</dbReference>
<dbReference type="GO" id="GO:0006826">
    <property type="term" value="P:iron ion transport"/>
    <property type="evidence" value="ECO:0007669"/>
    <property type="project" value="UniProtKB-KW"/>
</dbReference>
<dbReference type="CDD" id="cd06920">
    <property type="entry name" value="NEAT"/>
    <property type="match status" value="3"/>
</dbReference>
<dbReference type="FunFam" id="2.60.40.1850:FF:000003">
    <property type="entry name" value="Sortase B protein-sorting domain-containing protein"/>
    <property type="match status" value="1"/>
</dbReference>
<dbReference type="FunFam" id="2.60.40.1850:FF:000004">
    <property type="entry name" value="Sortase B protein-sorting domain-containing protein"/>
    <property type="match status" value="1"/>
</dbReference>
<dbReference type="FunFam" id="2.60.40.1850:FF:000005">
    <property type="entry name" value="Sortase B protein-sorting domain-containing protein"/>
    <property type="match status" value="1"/>
</dbReference>
<dbReference type="Gene3D" id="2.60.40.1850">
    <property type="match status" value="3"/>
</dbReference>
<dbReference type="InterPro" id="IPR050436">
    <property type="entry name" value="IsdA"/>
</dbReference>
<dbReference type="InterPro" id="IPR006635">
    <property type="entry name" value="NEAT_dom"/>
</dbReference>
<dbReference type="InterPro" id="IPR037250">
    <property type="entry name" value="NEAT_dom_sf"/>
</dbReference>
<dbReference type="InterPro" id="IPR017502">
    <property type="entry name" value="Sortase_SrtB_target"/>
</dbReference>
<dbReference type="NCBIfam" id="TIGR03063">
    <property type="entry name" value="srtB_target"/>
    <property type="match status" value="1"/>
</dbReference>
<dbReference type="PANTHER" id="PTHR37824">
    <property type="entry name" value="IRON-REGULATED SURFACE DETERMINANT PROTEIN C"/>
    <property type="match status" value="1"/>
</dbReference>
<dbReference type="PANTHER" id="PTHR37824:SF1">
    <property type="entry name" value="IRON-REGULATED SURFACE DETERMINANT PROTEIN C"/>
    <property type="match status" value="1"/>
</dbReference>
<dbReference type="Pfam" id="PF05031">
    <property type="entry name" value="NEAT"/>
    <property type="match status" value="3"/>
</dbReference>
<dbReference type="SMART" id="SM00725">
    <property type="entry name" value="NEAT"/>
    <property type="match status" value="3"/>
</dbReference>
<dbReference type="SUPFAM" id="SSF158911">
    <property type="entry name" value="NEAT domain-like"/>
    <property type="match status" value="3"/>
</dbReference>
<dbReference type="PROSITE" id="PS50978">
    <property type="entry name" value="NEAT"/>
    <property type="match status" value="3"/>
</dbReference>
<keyword id="KW-0002">3D-structure</keyword>
<keyword id="KW-0134">Cell wall</keyword>
<keyword id="KW-0349">Heme</keyword>
<keyword id="KW-0406">Ion transport</keyword>
<keyword id="KW-0408">Iron</keyword>
<keyword id="KW-0410">Iron transport</keyword>
<keyword id="KW-0479">Metal-binding</keyword>
<keyword id="KW-0572">Peptidoglycan-anchor</keyword>
<keyword id="KW-1185">Reference proteome</keyword>
<keyword id="KW-0677">Repeat</keyword>
<keyword id="KW-0964">Secreted</keyword>
<keyword id="KW-0732">Signal</keyword>
<keyword id="KW-0813">Transport</keyword>
<keyword id="KW-0843">Virulence</keyword>
<comment type="function">
    <text evidence="6 10 12 17 20 21">Acts as an extracellular and cell wall-bound hemophore; scavenges host heme and hemoglobin from the environment and also serves as a cell wall receptor for both (Probable). At low hemin (Hn) and hemoglobin (Hb) concentrations adsorbs Hn/Hb and presumably directs it to membrane transporters (Probable). Soluble Hbp2 can probably pass Hn/Hb to cell wall-anchored Hbp2, and both forms can accept Hn/Hb from Hbp1 (PubMed:25315777). May be involved in crossing the digestive barrier in infected animals (PubMed:15661014). Binds host hemin (Probable) (PubMed:21545655, PubMed:25315777). Binds host hemoglobin with affinity in the nanomolar range (PubMed:25315777).</text>
</comment>
<comment type="activity regulation">
    <text evidence="4">Is overexpressed in mecA, clpC and clpP mutants, suggesting the protein level is controlled by MecA, ClpC and ClpP (at protein level).</text>
</comment>
<comment type="subcellular location">
    <subcellularLocation>
        <location evidence="4">Cell surface</location>
    </subcellularLocation>
    <subcellularLocation>
        <location evidence="5 7 9 11">Secreted</location>
        <location evidence="5 7 9 11">Cell wall</location>
        <topology evidence="7 9 16">Peptidoglycan-anchor</topology>
    </subcellularLocation>
    <subcellularLocation>
        <location evidence="5 6 15">Secreted</location>
    </subcellularLocation>
    <text evidence="5 6 11">Most protein is secreted (PubMed:15028680, PubMed:15661014). Cell wall attachment is iron-regulated, only occurring when iron levels are low or fur is deleted (PubMed:15661014). Cell wall-anchored protein localizes to one cell pole or laterally (PubMed:15028680). Protein does not have to be cell wall-anchored for virulence (PubMed:15028680). During exponential growth detected on the cell surface as a series of dots in a helical pattern, it is excluded from the septum (PubMed:21725001). The helical pattern of InlA does not overlap with that of InlH, InlJ or Hbp2 (PubMed:21725001). Under iron-limiting conditions accumulates at the old cell pole (PubMed:21725001).</text>
</comment>
<comment type="induction">
    <text evidence="5 6 7 11">Expressed in mid-log phase, cotranscribed with lmo2184, the second gene in a possible lmo2186-lmo2180 operon (PubMed:15028680). Present in both exponential and stationary phase; more protein is expressed in log phase (at protein level) (PubMed:15028680, PubMed:16247833, PubMed:21725001). Induced under iron-deficient conditions and when fur (lmo1956, AC Q8Y5U9) is deleted (at protein level) (PubMed:15661014). Induced when bacteria are grown in human cell lines (PubMed:15661014).</text>
</comment>
<comment type="domain">
    <text evidence="12">Each NEAT domain binds hemin, whereas only NEAT1 and NEAT3 bind hemoglobin.</text>
</comment>
<comment type="disruption phenotype">
    <text evidence="4 6 8 10">Moderate reduction in growth rate at 37 degrees Celsius, reduced bacterial density in stationary phase (in strain LO28); no change in bacterial adherence to Caco-2 cells (PubMed:11700342). 2-fold reduction virulence in mice (PubMed:15661014). Does not impair iron transport (PubMed:15661014, PubMed:16430693). More sensitive measurements show that disruption decreases hemin uptake at low concentrations (0.5 uM and 5 uM; at 50 uM no effect is seen) (PubMed:21545655). Decreased hemin-binding and hemin uptake by whole bacteria at low concentrations of iron (PubMed:21545655).</text>
</comment>
<comment type="caution">
    <text evidence="4 17">Was originally thought to have a more extreme phenotype upon deletion; however the 100-fold reduction in virulence of the first deletion experiment, and impairment of phagosome escape seen in infected mice, is probably due to the kanamycin-cassette derivative used in that experiment.</text>
</comment>
<feature type="signal peptide" evidence="1">
    <location>
        <begin position="1"/>
        <end position="28"/>
    </location>
</feature>
<feature type="chain" id="PRO_5004287703" description="Hemin/hemoglobin-binding protein 2" evidence="1">
    <location>
        <begin position="29"/>
        <end position="569"/>
    </location>
</feature>
<feature type="propeptide" id="PRO_0000445906" description="Removed by sortase B" evidence="18 19">
    <location>
        <begin position="540"/>
        <end position="569"/>
    </location>
</feature>
<feature type="domain" description="NEAT 1" evidence="2">
    <location>
        <begin position="34"/>
        <end position="173"/>
    </location>
</feature>
<feature type="domain" description="NEAT 2" evidence="2 21">
    <location>
        <begin position="184"/>
        <end position="307"/>
    </location>
</feature>
<feature type="domain" description="NEAT 3" evidence="2">
    <location>
        <begin position="360"/>
        <end position="484"/>
    </location>
</feature>
<feature type="region of interest" description="Disordered" evidence="3">
    <location>
        <begin position="307"/>
        <end position="357"/>
    </location>
</feature>
<feature type="region of interest" description="Disordered" evidence="3">
    <location>
        <begin position="502"/>
        <end position="537"/>
    </location>
</feature>
<feature type="short sequence motif" description="NXZTN sorting signal" evidence="9 18">
    <location>
        <begin position="536"/>
        <end position="540"/>
    </location>
</feature>
<feature type="compositionally biased region" description="Polar residues" evidence="3">
    <location>
        <begin position="502"/>
        <end position="511"/>
    </location>
</feature>
<feature type="binding site" evidence="12">
    <location>
        <begin position="204"/>
        <end position="205"/>
    </location>
    <ligand>
        <name>heme</name>
        <dbReference type="ChEBI" id="CHEBI:30413"/>
    </ligand>
</feature>
<feature type="binding site" description="axial binding residue" evidence="12 22">
    <location>
        <position position="280"/>
    </location>
    <ligand>
        <name>heme</name>
        <dbReference type="ChEBI" id="CHEBI:30413"/>
    </ligand>
    <ligandPart>
        <name>Fe</name>
        <dbReference type="ChEBI" id="CHEBI:18248"/>
    </ligandPart>
</feature>
<feature type="binding site" evidence="12">
    <location>
        <position position="289"/>
    </location>
    <ligand>
        <name>heme</name>
        <dbReference type="ChEBI" id="CHEBI:30413"/>
    </ligand>
</feature>
<feature type="modified residue" description="Pentaglycyl murein peptidoglycan amidated threonine" evidence="18">
    <location>
        <position position="539"/>
    </location>
</feature>
<feature type="mutagenesis site" description="NEAT domain 2 no longer binds hemin." evidence="12">
    <original>Y</original>
    <variation>A</variation>
    <location>
        <position position="280"/>
    </location>
</feature>
<feature type="mutagenesis site" description="NEAT domain 2 binds hemin with considerably less affinity." evidence="12">
    <original>Y</original>
    <variation>A</variation>
    <location>
        <position position="289"/>
    </location>
</feature>
<feature type="mutagenesis site" description="No longer attached to the cell wall." evidence="9">
    <location>
        <begin position="536"/>
        <end position="540"/>
    </location>
</feature>
<feature type="mutagenesis site" description="No change in cell wall attachment." evidence="9">
    <original>AKTN</original>
    <variation>PKSS</variation>
    <location>
        <begin position="537"/>
        <end position="540"/>
    </location>
</feature>
<feature type="mutagenesis site" description="No longer attached to the cell wall." evidence="9">
    <original>AK</original>
    <variation>KV</variation>
    <location>
        <begin position="537"/>
        <end position="538"/>
    </location>
</feature>
<feature type="strand" evidence="24">
    <location>
        <begin position="186"/>
        <end position="191"/>
    </location>
</feature>
<feature type="strand" evidence="24">
    <location>
        <begin position="193"/>
        <end position="203"/>
    </location>
</feature>
<feature type="helix" evidence="24">
    <location>
        <begin position="205"/>
        <end position="209"/>
    </location>
</feature>
<feature type="strand" evidence="24">
    <location>
        <begin position="212"/>
        <end position="219"/>
    </location>
</feature>
<feature type="strand" evidence="24">
    <location>
        <begin position="222"/>
        <end position="230"/>
    </location>
</feature>
<feature type="turn" evidence="24">
    <location>
        <begin position="232"/>
        <end position="234"/>
    </location>
</feature>
<feature type="strand" evidence="24">
    <location>
        <begin position="235"/>
        <end position="242"/>
    </location>
</feature>
<feature type="strand" evidence="24">
    <location>
        <begin position="245"/>
        <end position="248"/>
    </location>
</feature>
<feature type="strand" evidence="24">
    <location>
        <begin position="250"/>
        <end position="255"/>
    </location>
</feature>
<feature type="turn" evidence="24">
    <location>
        <begin position="256"/>
        <end position="259"/>
    </location>
</feature>
<feature type="strand" evidence="24">
    <location>
        <begin position="260"/>
        <end position="266"/>
    </location>
</feature>
<feature type="strand" evidence="24">
    <location>
        <begin position="274"/>
        <end position="284"/>
    </location>
</feature>
<feature type="strand" evidence="24">
    <location>
        <begin position="287"/>
        <end position="299"/>
    </location>
</feature>
<proteinExistence type="evidence at protein level"/>
<sequence>MKKLWKKGLVAFLALTLIFQLIPGFASAADSRLKDGGEYQVQVNFYKDNTGKTTKESSEADKYIDHTATIKVENGQPYMYLTITNSTWWQTMAVSKNGTRPEKPAQADVYQDRYEDVQTVSTDAAKDTRVEKFKLSSLDDVIFSYMHIKVDAISYDHWYQVDLTIDPSTFKVISEPAVTTPVTLSDGIYTIPFVAKKANDDSNSSMQNYFNNPAWLKVKNGKKMVAMTVNDNKTVTALKTTLAGTLQDVKVVSEDKDANTRIVEFEVEDLNQPLAAHVNYEAPFNGSVYKGQADFRYVFDTAKATAASSYPGSDETPPVVNPGETNPPVTKPDPGTTNPPVTTPPTTPSKPAVVDPKNLLNNHTYSIDFDVFKDGTTETSMMESYVMKPALIKVENNQPYVYLTLTNSSWIKTFQYKVNGVWKDMEVVSGDINKNTRTVKYPVKDGTANTDVKTHVLIEDMPGFSYDHEYTVQVKLNAATIKDITGKDVTLKEPVKKDILNTGNVASNNNAGPKLAKPDFDDTNSVQKTASKTEKNAKTNDSSSMVWYITLFGASFLYLAYRLKRKRLS</sequence>
<organism>
    <name type="scientific">Listeria monocytogenes serovar 1/2a (strain ATCC BAA-679 / EGD-e)</name>
    <dbReference type="NCBI Taxonomy" id="169963"/>
    <lineage>
        <taxon>Bacteria</taxon>
        <taxon>Bacillati</taxon>
        <taxon>Bacillota</taxon>
        <taxon>Bacilli</taxon>
        <taxon>Bacillales</taxon>
        <taxon>Listeriaceae</taxon>
        <taxon>Listeria</taxon>
    </lineage>
</organism>
<gene>
    <name evidence="14" type="primary">hbp2</name>
    <name evidence="13" type="synonym">svpA</name>
    <name type="ordered locus">lmo2185</name>
</gene>
<protein>
    <recommendedName>
        <fullName evidence="14">Hemin/hemoglobin-binding protein 2</fullName>
        <shortName evidence="14">Hn/Hb-binding protein 2</shortName>
    </recommendedName>
    <alternativeName>
        <fullName>P64</fullName>
    </alternativeName>
    <alternativeName>
        <fullName evidence="13">Surface virulence-associated protein A</fullName>
    </alternativeName>
</protein>
<name>HBP2_LISMO</name>
<reference key="1">
    <citation type="journal article" date="2001" name="Science">
        <title>Comparative genomics of Listeria species.</title>
        <authorList>
            <person name="Glaser P."/>
            <person name="Frangeul L."/>
            <person name="Buchrieser C."/>
            <person name="Rusniok C."/>
            <person name="Amend A."/>
            <person name="Baquero F."/>
            <person name="Berche P."/>
            <person name="Bloecker H."/>
            <person name="Brandt P."/>
            <person name="Chakraborty T."/>
            <person name="Charbit A."/>
            <person name="Chetouani F."/>
            <person name="Couve E."/>
            <person name="de Daruvar A."/>
            <person name="Dehoux P."/>
            <person name="Domann E."/>
            <person name="Dominguez-Bernal G."/>
            <person name="Duchaud E."/>
            <person name="Durant L."/>
            <person name="Dussurget O."/>
            <person name="Entian K.-D."/>
            <person name="Fsihi H."/>
            <person name="Garcia-del Portillo F."/>
            <person name="Garrido P."/>
            <person name="Gautier L."/>
            <person name="Goebel W."/>
            <person name="Gomez-Lopez N."/>
            <person name="Hain T."/>
            <person name="Hauf J."/>
            <person name="Jackson D."/>
            <person name="Jones L.-M."/>
            <person name="Kaerst U."/>
            <person name="Kreft J."/>
            <person name="Kuhn M."/>
            <person name="Kunst F."/>
            <person name="Kurapkat G."/>
            <person name="Madueno E."/>
            <person name="Maitournam A."/>
            <person name="Mata Vicente J."/>
            <person name="Ng E."/>
            <person name="Nedjari H."/>
            <person name="Nordsiek G."/>
            <person name="Novella S."/>
            <person name="de Pablos B."/>
            <person name="Perez-Diaz J.-C."/>
            <person name="Purcell R."/>
            <person name="Remmel B."/>
            <person name="Rose M."/>
            <person name="Schlueter T."/>
            <person name="Simoes N."/>
            <person name="Tierrez A."/>
            <person name="Vazquez-Boland J.-A."/>
            <person name="Voss H."/>
            <person name="Wehland J."/>
            <person name="Cossart P."/>
        </authorList>
    </citation>
    <scope>NUCLEOTIDE SEQUENCE [LARGE SCALE GENOMIC DNA]</scope>
    <source>
        <strain>ATCC BAA-679 / EGD-e</strain>
    </source>
</reference>
<reference key="2">
    <citation type="journal article" date="2001" name="Microbiology">
        <title>SvpA, a novel surface virulence-associated protein required for intracellular survival of Listeria monocytogenes.</title>
        <authorList>
            <person name="Borezee E."/>
            <person name="Pellegrini E."/>
            <person name="Beretti J.L."/>
            <person name="Berche P."/>
        </authorList>
    </citation>
    <scope>ACTIVITY REGULATION</scope>
    <scope>SUBCELLULAR LOCATION</scope>
    <scope>DISRUPTION PHENOTYPE</scope>
    <source>
        <strain>LO28</strain>
    </source>
</reference>
<reference key="3">
    <citation type="journal article" date="2004" name="J. Bacteriol.">
        <title>Sortase B, a new class of sortase in Listeria monocytogenes.</title>
        <authorList>
            <person name="Bierne H."/>
            <person name="Garandeau C."/>
            <person name="Pucciarelli M.G."/>
            <person name="Sabet C."/>
            <person name="Newton S."/>
            <person name="Garcia-del Portillo F."/>
            <person name="Cossart P."/>
            <person name="Charbit A."/>
        </authorList>
    </citation>
    <scope>SUBCELLULAR LOCATION</scope>
    <scope>INDUCTION</scope>
    <scope>OPERON</scope>
    <source>
        <strain>ATCC BAA-679 / EGD-e</strain>
    </source>
</reference>
<reference key="4">
    <citation type="journal article" date="2005" name="Mol. Microbiol.">
        <title>The svpA-srtB locus of Listeria monocytogenes: fur-mediated iron regulation and effect on virulence.</title>
        <authorList>
            <person name="Newton S.M."/>
            <person name="Klebba P.E."/>
            <person name="Raynaud C."/>
            <person name="Shao Y."/>
            <person name="Jiang X."/>
            <person name="Dubail I."/>
            <person name="Archer C."/>
            <person name="Frehel C."/>
            <person name="Charbit A."/>
        </authorList>
    </citation>
    <scope>FUNCTION</scope>
    <scope>HEMIN-BINDING</scope>
    <scope>SUBCELLULAR LOCATION</scope>
    <scope>INDUCTION BY IRON-DEPLETION</scope>
    <scope>DISRUPTION PHENOTYPE</scope>
    <source>
        <strain>ATCC BAA-679 / EGD-e</strain>
    </source>
</reference>
<reference key="5">
    <citation type="journal article" date="2005" name="Proteomics">
        <title>Identification of substrates of the Listeria monocytogenes sortases A and B by a non-gel proteomic analysis.</title>
        <authorList>
            <person name="Pucciarelli M.G."/>
            <person name="Calvo E."/>
            <person name="Sabet C."/>
            <person name="Bierne H."/>
            <person name="Cossart P."/>
            <person name="Garcia-del Portillo F."/>
        </authorList>
    </citation>
    <scope>IDENTIFICATION BY MASS SPECTROMETRY</scope>
    <scope>INDUCTION</scope>
    <scope>PROCESSING BY SRTB</scope>
    <source>
        <strain>ATCC BAA-679 / EGD-e</strain>
    </source>
</reference>
<reference key="6">
    <citation type="journal article" date="2006" name="Mol. Microbiol.">
        <title>Iron acquisition systems for ferric hydroxamates, haemin and haemoglobin in Listeria monocytogenes.</title>
        <authorList>
            <person name="Jin B."/>
            <person name="Newton S.M."/>
            <person name="Shao Y."/>
            <person name="Jiang X."/>
            <person name="Charbit A."/>
            <person name="Klebba P.E."/>
        </authorList>
    </citation>
    <scope>DISRUPTION PHENOTYPE</scope>
    <source>
        <strain>ATCC BAA-679 / EGD-e</strain>
    </source>
</reference>
<reference key="7">
    <citation type="journal article" date="2009" name="J. Biol. Chem.">
        <title>The Listeria monocytogenes sortase-B recognizes varied amino acids at position 2 of the sorting motif.</title>
        <authorList>
            <person name="Mariscotti J.F."/>
            <person name="Garcia-del Portillo F."/>
            <person name="Pucciarelli M.G."/>
        </authorList>
    </citation>
    <scope>SUBCELLULAR LOCATION</scope>
    <scope>PROCESSING BY SRTB</scope>
    <scope>SORTING SIGNAL</scope>
    <scope>MUTAGENESIS OF 536-ASN--ASN-540</scope>
    <source>
        <strain>ATCC BAA-679 / EGD-e</strain>
    </source>
</reference>
<reference key="8">
    <citation type="journal article" date="2011" name="J. Bacteriol.">
        <title>Regulated shift from helical to polar localization of Listeria monocytogenes cell wall-anchored proteins.</title>
        <authorList>
            <person name="Bruck S."/>
            <person name="Personnic N."/>
            <person name="Prevost M.C."/>
            <person name="Cossart P."/>
            <person name="Bierne H."/>
        </authorList>
    </citation>
    <scope>SUBCELLULAR LOCATION</scope>
    <scope>INDUCTION</scope>
    <source>
        <strain>ATCC BAA-679 / EGD-e</strain>
    </source>
</reference>
<reference key="9">
    <citation type="journal article" date="2011" name="Mol. Microbiol.">
        <title>Sortase independent and dependent systems for acquisition of haem and haemoglobin in Listeria monocytogenes.</title>
        <authorList>
            <person name="Xiao Q."/>
            <person name="Jiang X."/>
            <person name="Moore K.J."/>
            <person name="Shao Y."/>
            <person name="Pi H."/>
            <person name="Dubail I."/>
            <person name="Charbit A."/>
            <person name="Newton S.M."/>
            <person name="Klebba P.E."/>
        </authorList>
    </citation>
    <scope>FUNCTION</scope>
    <scope>HEMIN-BINDING</scope>
    <scope>DISRUPTION PHENOTYPE</scope>
    <source>
        <strain>ATCC BAA-679 / EGD-e</strain>
    </source>
</reference>
<reference evidence="22 23" key="10">
    <citation type="journal article" date="2014" name="J. Biol. Chem.">
        <title>Novel mechanism of hemin capture by Hbp2, the hemoglobin-binding hemophore from Listeria monocytogenes.</title>
        <authorList>
            <person name="Malmirchegini G.R."/>
            <person name="Sjodt M."/>
            <person name="Shnitkind S."/>
            <person name="Sawaya M.R."/>
            <person name="Rosinski J."/>
            <person name="Newton S.M."/>
            <person name="Klebba P.E."/>
            <person name="Clubb R.T."/>
        </authorList>
    </citation>
    <scope>X-RAY CRYSTALLOGRAPHY (1.80 ANGSTROMS) OF 183-303 IN COMPLEX WITH AND WITHOUT HEME</scope>
    <scope>FUNCTION IN HEMIN AND HEMOGLOBIN-BINDING</scope>
    <scope>DOMAIN</scope>
    <scope>MUTAGENESIS OF TYR-280 AND TYR-289</scope>
    <source>
        <strain>ATCC BAA-679 / EGD-e</strain>
    </source>
</reference>